<gene>
    <name evidence="1" type="primary">rplI</name>
    <name type="ordered locus">BCE33L5166</name>
</gene>
<evidence type="ECO:0000255" key="1">
    <source>
        <dbReference type="HAMAP-Rule" id="MF_00503"/>
    </source>
</evidence>
<evidence type="ECO:0000305" key="2"/>
<dbReference type="EMBL" id="CP000001">
    <property type="protein sequence ID" value="AAU20296.1"/>
    <property type="molecule type" value="Genomic_DNA"/>
</dbReference>
<dbReference type="RefSeq" id="WP_000864235.1">
    <property type="nucleotide sequence ID" value="NZ_CP009968.1"/>
</dbReference>
<dbReference type="SMR" id="Q630D3"/>
<dbReference type="GeneID" id="83639160"/>
<dbReference type="KEGG" id="bcz:BCE33L5166"/>
<dbReference type="PATRIC" id="fig|288681.22.peg.175"/>
<dbReference type="Proteomes" id="UP000002612">
    <property type="component" value="Chromosome"/>
</dbReference>
<dbReference type="GO" id="GO:1990904">
    <property type="term" value="C:ribonucleoprotein complex"/>
    <property type="evidence" value="ECO:0007669"/>
    <property type="project" value="UniProtKB-KW"/>
</dbReference>
<dbReference type="GO" id="GO:0005840">
    <property type="term" value="C:ribosome"/>
    <property type="evidence" value="ECO:0007669"/>
    <property type="project" value="UniProtKB-KW"/>
</dbReference>
<dbReference type="GO" id="GO:0019843">
    <property type="term" value="F:rRNA binding"/>
    <property type="evidence" value="ECO:0007669"/>
    <property type="project" value="UniProtKB-UniRule"/>
</dbReference>
<dbReference type="GO" id="GO:0003735">
    <property type="term" value="F:structural constituent of ribosome"/>
    <property type="evidence" value="ECO:0007669"/>
    <property type="project" value="InterPro"/>
</dbReference>
<dbReference type="GO" id="GO:0006412">
    <property type="term" value="P:translation"/>
    <property type="evidence" value="ECO:0007669"/>
    <property type="project" value="UniProtKB-UniRule"/>
</dbReference>
<dbReference type="FunFam" id="3.10.430.100:FF:000002">
    <property type="entry name" value="50S ribosomal protein L9"/>
    <property type="match status" value="1"/>
</dbReference>
<dbReference type="FunFam" id="3.40.5.10:FF:000002">
    <property type="entry name" value="50S ribosomal protein L9"/>
    <property type="match status" value="1"/>
</dbReference>
<dbReference type="Gene3D" id="3.10.430.100">
    <property type="entry name" value="Ribosomal protein L9, C-terminal domain"/>
    <property type="match status" value="1"/>
</dbReference>
<dbReference type="Gene3D" id="3.40.5.10">
    <property type="entry name" value="Ribosomal protein L9, N-terminal domain"/>
    <property type="match status" value="1"/>
</dbReference>
<dbReference type="HAMAP" id="MF_00503">
    <property type="entry name" value="Ribosomal_bL9"/>
    <property type="match status" value="1"/>
</dbReference>
<dbReference type="InterPro" id="IPR000244">
    <property type="entry name" value="Ribosomal_bL9"/>
</dbReference>
<dbReference type="InterPro" id="IPR009027">
    <property type="entry name" value="Ribosomal_bL9/RNase_H1_N"/>
</dbReference>
<dbReference type="InterPro" id="IPR020594">
    <property type="entry name" value="Ribosomal_bL9_bac/chp"/>
</dbReference>
<dbReference type="InterPro" id="IPR020069">
    <property type="entry name" value="Ribosomal_bL9_C"/>
</dbReference>
<dbReference type="InterPro" id="IPR036791">
    <property type="entry name" value="Ribosomal_bL9_C_sf"/>
</dbReference>
<dbReference type="InterPro" id="IPR020070">
    <property type="entry name" value="Ribosomal_bL9_N"/>
</dbReference>
<dbReference type="InterPro" id="IPR036935">
    <property type="entry name" value="Ribosomal_bL9_N_sf"/>
</dbReference>
<dbReference type="NCBIfam" id="TIGR00158">
    <property type="entry name" value="L9"/>
    <property type="match status" value="1"/>
</dbReference>
<dbReference type="PANTHER" id="PTHR21368">
    <property type="entry name" value="50S RIBOSOMAL PROTEIN L9"/>
    <property type="match status" value="1"/>
</dbReference>
<dbReference type="Pfam" id="PF03948">
    <property type="entry name" value="Ribosomal_L9_C"/>
    <property type="match status" value="1"/>
</dbReference>
<dbReference type="Pfam" id="PF01281">
    <property type="entry name" value="Ribosomal_L9_N"/>
    <property type="match status" value="1"/>
</dbReference>
<dbReference type="SUPFAM" id="SSF55658">
    <property type="entry name" value="L9 N-domain-like"/>
    <property type="match status" value="1"/>
</dbReference>
<dbReference type="SUPFAM" id="SSF55653">
    <property type="entry name" value="Ribosomal protein L9 C-domain"/>
    <property type="match status" value="1"/>
</dbReference>
<dbReference type="PROSITE" id="PS00651">
    <property type="entry name" value="RIBOSOMAL_L9"/>
    <property type="match status" value="1"/>
</dbReference>
<reference key="1">
    <citation type="journal article" date="2006" name="J. Bacteriol.">
        <title>Pathogenomic sequence analysis of Bacillus cereus and Bacillus thuringiensis isolates closely related to Bacillus anthracis.</title>
        <authorList>
            <person name="Han C.S."/>
            <person name="Xie G."/>
            <person name="Challacombe J.F."/>
            <person name="Altherr M.R."/>
            <person name="Bhotika S.S."/>
            <person name="Bruce D."/>
            <person name="Campbell C.S."/>
            <person name="Campbell M.L."/>
            <person name="Chen J."/>
            <person name="Chertkov O."/>
            <person name="Cleland C."/>
            <person name="Dimitrijevic M."/>
            <person name="Doggett N.A."/>
            <person name="Fawcett J.J."/>
            <person name="Glavina T."/>
            <person name="Goodwin L.A."/>
            <person name="Hill K.K."/>
            <person name="Hitchcock P."/>
            <person name="Jackson P.J."/>
            <person name="Keim P."/>
            <person name="Kewalramani A.R."/>
            <person name="Longmire J."/>
            <person name="Lucas S."/>
            <person name="Malfatti S."/>
            <person name="McMurry K."/>
            <person name="Meincke L.J."/>
            <person name="Misra M."/>
            <person name="Moseman B.L."/>
            <person name="Mundt M."/>
            <person name="Munk A.C."/>
            <person name="Okinaka R.T."/>
            <person name="Parson-Quintana B."/>
            <person name="Reilly L.P."/>
            <person name="Richardson P."/>
            <person name="Robinson D.L."/>
            <person name="Rubin E."/>
            <person name="Saunders E."/>
            <person name="Tapia R."/>
            <person name="Tesmer J.G."/>
            <person name="Thayer N."/>
            <person name="Thompson L.S."/>
            <person name="Tice H."/>
            <person name="Ticknor L.O."/>
            <person name="Wills P.L."/>
            <person name="Brettin T.S."/>
            <person name="Gilna P."/>
        </authorList>
    </citation>
    <scope>NUCLEOTIDE SEQUENCE [LARGE SCALE GENOMIC DNA]</scope>
    <source>
        <strain>ZK / E33L</strain>
    </source>
</reference>
<keyword id="KW-0687">Ribonucleoprotein</keyword>
<keyword id="KW-0689">Ribosomal protein</keyword>
<keyword id="KW-0694">RNA-binding</keyword>
<keyword id="KW-0699">rRNA-binding</keyword>
<sequence>MKVIFLKDVKGKGKKGEVKNVPDGYANNFLLKQGLAAEATNSSMKTLEAQKRKEEKDAAAELESAKQLKETLEKLTVELKAKSGEGGRLFGSITSKQIVDAMQKSHKIKLDKRKFEMDDAIRALGYTNVTVKLHPQVTATVKVHVSEQ</sequence>
<feature type="chain" id="PRO_0000236476" description="Large ribosomal subunit protein bL9">
    <location>
        <begin position="1"/>
        <end position="148"/>
    </location>
</feature>
<organism>
    <name type="scientific">Bacillus cereus (strain ZK / E33L)</name>
    <dbReference type="NCBI Taxonomy" id="288681"/>
    <lineage>
        <taxon>Bacteria</taxon>
        <taxon>Bacillati</taxon>
        <taxon>Bacillota</taxon>
        <taxon>Bacilli</taxon>
        <taxon>Bacillales</taxon>
        <taxon>Bacillaceae</taxon>
        <taxon>Bacillus</taxon>
        <taxon>Bacillus cereus group</taxon>
    </lineage>
</organism>
<name>RL9_BACCZ</name>
<accession>Q630D3</accession>
<proteinExistence type="inferred from homology"/>
<comment type="function">
    <text evidence="1">Binds to the 23S rRNA.</text>
</comment>
<comment type="similarity">
    <text evidence="1">Belongs to the bacterial ribosomal protein bL9 family.</text>
</comment>
<protein>
    <recommendedName>
        <fullName evidence="1">Large ribosomal subunit protein bL9</fullName>
    </recommendedName>
    <alternativeName>
        <fullName evidence="2">50S ribosomal protein L9</fullName>
    </alternativeName>
</protein>